<reference key="1">
    <citation type="journal article" date="2007" name="Proc. Natl. Acad. Sci. U.S.A.">
        <title>The genome of Syntrophus aciditrophicus: life at the thermodynamic limit of microbial growth.</title>
        <authorList>
            <person name="McInerney M.J."/>
            <person name="Rohlin L."/>
            <person name="Mouttaki H."/>
            <person name="Kim U."/>
            <person name="Krupp R.S."/>
            <person name="Rios-Hernandez L."/>
            <person name="Sieber J."/>
            <person name="Struchtemeyer C.G."/>
            <person name="Bhattacharyya A."/>
            <person name="Campbell J.W."/>
            <person name="Gunsalus R.P."/>
        </authorList>
    </citation>
    <scope>NUCLEOTIDE SEQUENCE [LARGE SCALE GENOMIC DNA]</scope>
    <source>
        <strain>SB</strain>
    </source>
</reference>
<organism>
    <name type="scientific">Syntrophus aciditrophicus (strain SB)</name>
    <dbReference type="NCBI Taxonomy" id="56780"/>
    <lineage>
        <taxon>Bacteria</taxon>
        <taxon>Pseudomonadati</taxon>
        <taxon>Thermodesulfobacteriota</taxon>
        <taxon>Syntrophia</taxon>
        <taxon>Syntrophales</taxon>
        <taxon>Syntrophaceae</taxon>
        <taxon>Syntrophus</taxon>
    </lineage>
</organism>
<feature type="chain" id="PRO_0000368835" description="ATP synthase subunit b 1">
    <location>
        <begin position="1"/>
        <end position="202"/>
    </location>
</feature>
<feature type="transmembrane region" description="Helical" evidence="1">
    <location>
        <begin position="17"/>
        <end position="37"/>
    </location>
</feature>
<comment type="function">
    <text evidence="1">F(1)F(0) ATP synthase produces ATP from ADP in the presence of a proton or sodium gradient. F-type ATPases consist of two structural domains, F(1) containing the extramembraneous catalytic core and F(0) containing the membrane proton channel, linked together by a central stalk and a peripheral stalk. During catalysis, ATP synthesis in the catalytic domain of F(1) is coupled via a rotary mechanism of the central stalk subunits to proton translocation.</text>
</comment>
<comment type="function">
    <text evidence="1">Component of the F(0) channel, it forms part of the peripheral stalk, linking F(1) to F(0).</text>
</comment>
<comment type="subunit">
    <text evidence="1">F-type ATPases have 2 components, F(1) - the catalytic core - and F(0) - the membrane proton channel. F(1) has five subunits: alpha(3), beta(3), gamma(1), delta(1), epsilon(1). F(0) has three main subunits: a(1), b(2) and c(10-14). The alpha and beta chains form an alternating ring which encloses part of the gamma chain. F(1) is attached to F(0) by a central stalk formed by the gamma and epsilon chains, while a peripheral stalk is formed by the delta and b chains.</text>
</comment>
<comment type="subcellular location">
    <subcellularLocation>
        <location evidence="1">Cell inner membrane</location>
        <topology evidence="1">Single-pass membrane protein</topology>
    </subcellularLocation>
</comment>
<comment type="similarity">
    <text evidence="1">Belongs to the ATPase B chain family.</text>
</comment>
<evidence type="ECO:0000255" key="1">
    <source>
        <dbReference type="HAMAP-Rule" id="MF_01398"/>
    </source>
</evidence>
<accession>Q2LQZ9</accession>
<sequence>MKKSVWHHSLKGYCGRIAAVLCFSVLVPLVAMAAEGGGHGEEGTDWVNFGWRVLDFIILVGLFYWLLASKVKSFFSGRREEIKTTLEEARLAKEAAEHKFKEYSEKLDKASKEIEGVYEMIRAQGQAEKEKILEDARKAAAKMKEDTQARIEQELKKASQQLRMEAVQLSVHVAEDILKRNITPEDHQSMVKDYLDKVVRKH</sequence>
<proteinExistence type="inferred from homology"/>
<gene>
    <name evidence="1" type="primary">atpF1</name>
    <name type="ordered locus">SYNAS_06280</name>
    <name type="ORF">SYN_00548</name>
</gene>
<keyword id="KW-0066">ATP synthesis</keyword>
<keyword id="KW-0997">Cell inner membrane</keyword>
<keyword id="KW-1003">Cell membrane</keyword>
<keyword id="KW-0138">CF(0)</keyword>
<keyword id="KW-0375">Hydrogen ion transport</keyword>
<keyword id="KW-0406">Ion transport</keyword>
<keyword id="KW-0472">Membrane</keyword>
<keyword id="KW-1185">Reference proteome</keyword>
<keyword id="KW-0812">Transmembrane</keyword>
<keyword id="KW-1133">Transmembrane helix</keyword>
<keyword id="KW-0813">Transport</keyword>
<dbReference type="EMBL" id="CP000252">
    <property type="protein sequence ID" value="ABC76507.1"/>
    <property type="molecule type" value="Genomic_DNA"/>
</dbReference>
<dbReference type="RefSeq" id="WP_011416541.1">
    <property type="nucleotide sequence ID" value="NC_007759.1"/>
</dbReference>
<dbReference type="SMR" id="Q2LQZ9"/>
<dbReference type="STRING" id="56780.SYN_00548"/>
<dbReference type="KEGG" id="sat:SYN_00548"/>
<dbReference type="eggNOG" id="COG0711">
    <property type="taxonomic scope" value="Bacteria"/>
</dbReference>
<dbReference type="HOGENOM" id="CLU_079215_3_2_7"/>
<dbReference type="InParanoid" id="Q2LQZ9"/>
<dbReference type="OrthoDB" id="5471016at2"/>
<dbReference type="Proteomes" id="UP000001933">
    <property type="component" value="Chromosome"/>
</dbReference>
<dbReference type="GO" id="GO:0005886">
    <property type="term" value="C:plasma membrane"/>
    <property type="evidence" value="ECO:0007669"/>
    <property type="project" value="UniProtKB-SubCell"/>
</dbReference>
<dbReference type="GO" id="GO:0045259">
    <property type="term" value="C:proton-transporting ATP synthase complex"/>
    <property type="evidence" value="ECO:0007669"/>
    <property type="project" value="UniProtKB-KW"/>
</dbReference>
<dbReference type="GO" id="GO:0046933">
    <property type="term" value="F:proton-transporting ATP synthase activity, rotational mechanism"/>
    <property type="evidence" value="ECO:0007669"/>
    <property type="project" value="UniProtKB-UniRule"/>
</dbReference>
<dbReference type="GO" id="GO:0046961">
    <property type="term" value="F:proton-transporting ATPase activity, rotational mechanism"/>
    <property type="evidence" value="ECO:0007669"/>
    <property type="project" value="TreeGrafter"/>
</dbReference>
<dbReference type="CDD" id="cd06503">
    <property type="entry name" value="ATP-synt_Fo_b"/>
    <property type="match status" value="1"/>
</dbReference>
<dbReference type="HAMAP" id="MF_01398">
    <property type="entry name" value="ATP_synth_b_bprime"/>
    <property type="match status" value="1"/>
</dbReference>
<dbReference type="InterPro" id="IPR002146">
    <property type="entry name" value="ATP_synth_b/b'su_bac/chlpt"/>
</dbReference>
<dbReference type="InterPro" id="IPR005864">
    <property type="entry name" value="ATP_synth_F0_bsu_bac"/>
</dbReference>
<dbReference type="InterPro" id="IPR050059">
    <property type="entry name" value="ATP_synthase_B_chain"/>
</dbReference>
<dbReference type="NCBIfam" id="TIGR01144">
    <property type="entry name" value="ATP_synt_b"/>
    <property type="match status" value="1"/>
</dbReference>
<dbReference type="PANTHER" id="PTHR33445:SF1">
    <property type="entry name" value="ATP SYNTHASE SUBUNIT B"/>
    <property type="match status" value="1"/>
</dbReference>
<dbReference type="PANTHER" id="PTHR33445">
    <property type="entry name" value="ATP SYNTHASE SUBUNIT B', CHLOROPLASTIC"/>
    <property type="match status" value="1"/>
</dbReference>
<dbReference type="Pfam" id="PF00430">
    <property type="entry name" value="ATP-synt_B"/>
    <property type="match status" value="1"/>
</dbReference>
<name>ATPF1_SYNAS</name>
<protein>
    <recommendedName>
        <fullName evidence="1">ATP synthase subunit b 1</fullName>
    </recommendedName>
    <alternativeName>
        <fullName evidence="1">ATP synthase F(0) sector subunit b 1</fullName>
    </alternativeName>
    <alternativeName>
        <fullName evidence="1">ATPase subunit I 1</fullName>
    </alternativeName>
    <alternativeName>
        <fullName evidence="1">F-type ATPase subunit b 1</fullName>
        <shortName evidence="1">F-ATPase subunit b 1</shortName>
    </alternativeName>
</protein>